<proteinExistence type="inferred from homology"/>
<reference key="1">
    <citation type="submission" date="2007-11" db="EMBL/GenBank/DDBJ databases">
        <title>Complete sequence of Petroga mobilis SJ95.</title>
        <authorList>
            <consortium name="US DOE Joint Genome Institute"/>
            <person name="Copeland A."/>
            <person name="Lucas S."/>
            <person name="Lapidus A."/>
            <person name="Barry K."/>
            <person name="Glavina del Rio T."/>
            <person name="Dalin E."/>
            <person name="Tice H."/>
            <person name="Pitluck S."/>
            <person name="Meincke L."/>
            <person name="Brettin T."/>
            <person name="Bruce D."/>
            <person name="Detter J.C."/>
            <person name="Han C."/>
            <person name="Kuske C.R."/>
            <person name="Schmutz J."/>
            <person name="Larimer F."/>
            <person name="Land M."/>
            <person name="Hauser L."/>
            <person name="Kyrpides N."/>
            <person name="Mikhailova N."/>
            <person name="Noll K."/>
            <person name="Richardson P."/>
        </authorList>
    </citation>
    <scope>NUCLEOTIDE SEQUENCE [LARGE SCALE GENOMIC DNA]</scope>
    <source>
        <strain>DSM 10674 / SJ95</strain>
    </source>
</reference>
<gene>
    <name evidence="1" type="primary">atpF</name>
    <name type="ordered locus">Pmob_0749</name>
</gene>
<dbReference type="EMBL" id="CP000879">
    <property type="protein sequence ID" value="ABX31473.1"/>
    <property type="molecule type" value="Genomic_DNA"/>
</dbReference>
<dbReference type="RefSeq" id="WP_012208576.1">
    <property type="nucleotide sequence ID" value="NC_010003.1"/>
</dbReference>
<dbReference type="SMR" id="A9BFX7"/>
<dbReference type="STRING" id="403833.Pmob_0749"/>
<dbReference type="KEGG" id="pmo:Pmob_0749"/>
<dbReference type="eggNOG" id="COG0711">
    <property type="taxonomic scope" value="Bacteria"/>
</dbReference>
<dbReference type="HOGENOM" id="CLU_079215_4_5_0"/>
<dbReference type="OrthoDB" id="49468at2"/>
<dbReference type="Proteomes" id="UP000000789">
    <property type="component" value="Chromosome"/>
</dbReference>
<dbReference type="GO" id="GO:0005886">
    <property type="term" value="C:plasma membrane"/>
    <property type="evidence" value="ECO:0007669"/>
    <property type="project" value="UniProtKB-SubCell"/>
</dbReference>
<dbReference type="GO" id="GO:0045259">
    <property type="term" value="C:proton-transporting ATP synthase complex"/>
    <property type="evidence" value="ECO:0007669"/>
    <property type="project" value="UniProtKB-KW"/>
</dbReference>
<dbReference type="GO" id="GO:0046933">
    <property type="term" value="F:proton-transporting ATP synthase activity, rotational mechanism"/>
    <property type="evidence" value="ECO:0007669"/>
    <property type="project" value="UniProtKB-UniRule"/>
</dbReference>
<dbReference type="GO" id="GO:0046961">
    <property type="term" value="F:proton-transporting ATPase activity, rotational mechanism"/>
    <property type="evidence" value="ECO:0007669"/>
    <property type="project" value="TreeGrafter"/>
</dbReference>
<dbReference type="CDD" id="cd06503">
    <property type="entry name" value="ATP-synt_Fo_b"/>
    <property type="match status" value="1"/>
</dbReference>
<dbReference type="HAMAP" id="MF_01398">
    <property type="entry name" value="ATP_synth_b_bprime"/>
    <property type="match status" value="1"/>
</dbReference>
<dbReference type="InterPro" id="IPR028987">
    <property type="entry name" value="ATP_synth_B-like_membr_sf"/>
</dbReference>
<dbReference type="InterPro" id="IPR002146">
    <property type="entry name" value="ATP_synth_b/b'su_bac/chlpt"/>
</dbReference>
<dbReference type="InterPro" id="IPR005864">
    <property type="entry name" value="ATP_synth_F0_bsu_bac"/>
</dbReference>
<dbReference type="InterPro" id="IPR050059">
    <property type="entry name" value="ATP_synthase_B_chain"/>
</dbReference>
<dbReference type="NCBIfam" id="TIGR01144">
    <property type="entry name" value="ATP_synt_b"/>
    <property type="match status" value="1"/>
</dbReference>
<dbReference type="PANTHER" id="PTHR33445">
    <property type="entry name" value="ATP SYNTHASE SUBUNIT B', CHLOROPLASTIC"/>
    <property type="match status" value="1"/>
</dbReference>
<dbReference type="PANTHER" id="PTHR33445:SF2">
    <property type="entry name" value="ATP SYNTHASE SUBUNIT B', CHLOROPLASTIC"/>
    <property type="match status" value="1"/>
</dbReference>
<dbReference type="Pfam" id="PF00430">
    <property type="entry name" value="ATP-synt_B"/>
    <property type="match status" value="1"/>
</dbReference>
<dbReference type="SUPFAM" id="SSF81573">
    <property type="entry name" value="F1F0 ATP synthase subunit B, membrane domain"/>
    <property type="match status" value="1"/>
</dbReference>
<name>ATPF_PETMO</name>
<sequence>MISFNLTSIVNLVGFLAFMFLMYRLLYKPYFDMTDKRKKEVEKNLNEAEKLRLEAQLKKEELDKQLSEADEKRREILSEADEQAKSIIKAAQGEAQEQRKFILDKAEKEAEEIKESAARELQSRIVSLAVTISSMILKEQIDKKKNEELIRRAINSLKDKGEL</sequence>
<organism>
    <name type="scientific">Petrotoga mobilis (strain DSM 10674 / SJ95)</name>
    <dbReference type="NCBI Taxonomy" id="403833"/>
    <lineage>
        <taxon>Bacteria</taxon>
        <taxon>Thermotogati</taxon>
        <taxon>Thermotogota</taxon>
        <taxon>Thermotogae</taxon>
        <taxon>Petrotogales</taxon>
        <taxon>Petrotogaceae</taxon>
        <taxon>Petrotoga</taxon>
    </lineage>
</organism>
<keyword id="KW-0066">ATP synthesis</keyword>
<keyword id="KW-0997">Cell inner membrane</keyword>
<keyword id="KW-1003">Cell membrane</keyword>
<keyword id="KW-0138">CF(0)</keyword>
<keyword id="KW-0375">Hydrogen ion transport</keyword>
<keyword id="KW-0406">Ion transport</keyword>
<keyword id="KW-0472">Membrane</keyword>
<keyword id="KW-0812">Transmembrane</keyword>
<keyword id="KW-1133">Transmembrane helix</keyword>
<keyword id="KW-0813">Transport</keyword>
<comment type="function">
    <text evidence="1">F(1)F(0) ATP synthase produces ATP from ADP in the presence of a proton or sodium gradient. F-type ATPases consist of two structural domains, F(1) containing the extramembraneous catalytic core and F(0) containing the membrane proton channel, linked together by a central stalk and a peripheral stalk. During catalysis, ATP synthesis in the catalytic domain of F(1) is coupled via a rotary mechanism of the central stalk subunits to proton translocation.</text>
</comment>
<comment type="function">
    <text evidence="1">Component of the F(0) channel, it forms part of the peripheral stalk, linking F(1) to F(0).</text>
</comment>
<comment type="subunit">
    <text evidence="1">F-type ATPases have 2 components, F(1) - the catalytic core - and F(0) - the membrane proton channel. F(1) has five subunits: alpha(3), beta(3), gamma(1), delta(1), epsilon(1). F(0) has three main subunits: a(1), b(2) and c(10-14). The alpha and beta chains form an alternating ring which encloses part of the gamma chain. F(1) is attached to F(0) by a central stalk formed by the gamma and epsilon chains, while a peripheral stalk is formed by the delta and b chains.</text>
</comment>
<comment type="subcellular location">
    <subcellularLocation>
        <location evidence="1">Cell inner membrane</location>
        <topology evidence="1">Single-pass membrane protein</topology>
    </subcellularLocation>
</comment>
<comment type="similarity">
    <text evidence="1">Belongs to the ATPase B chain family.</text>
</comment>
<accession>A9BFX7</accession>
<evidence type="ECO:0000255" key="1">
    <source>
        <dbReference type="HAMAP-Rule" id="MF_01398"/>
    </source>
</evidence>
<feature type="chain" id="PRO_0000368654" description="ATP synthase subunit b">
    <location>
        <begin position="1"/>
        <end position="163"/>
    </location>
</feature>
<feature type="transmembrane region" description="Helical" evidence="1">
    <location>
        <begin position="1"/>
        <end position="21"/>
    </location>
</feature>
<protein>
    <recommendedName>
        <fullName evidence="1">ATP synthase subunit b</fullName>
    </recommendedName>
    <alternativeName>
        <fullName evidence="1">ATP synthase F(0) sector subunit b</fullName>
    </alternativeName>
    <alternativeName>
        <fullName evidence="1">ATPase subunit I</fullName>
    </alternativeName>
    <alternativeName>
        <fullName evidence="1">F-type ATPase subunit b</fullName>
        <shortName evidence="1">F-ATPase subunit b</shortName>
    </alternativeName>
</protein>